<evidence type="ECO:0000255" key="1">
    <source>
        <dbReference type="HAMAP-Rule" id="MF_03163"/>
    </source>
</evidence>
<evidence type="ECO:0000256" key="2">
    <source>
        <dbReference type="SAM" id="MobiDB-lite"/>
    </source>
</evidence>
<sequence>MGKQQKKHSKGRLDRYYYLAKEKGYRARSSFKIIQINEKYGHFLEKSKVVIDLCAAPGSWCQVASQLCPINSLIIGVDIVPIKPLPNVITFQSDITTEDCRSRLRGHMKTWKADTVLHDGAPNVGLGWVQDAFTQSQLTLQALKLAVENLTAGGTFVTKIFRSRDYNNLMWVFQQLFEKVEATKPPASRNVSAEIFVVCKGFKAPKKLDPRLLDPKEVFEELGGGNESKQNNEAKIFNPEKFSSQRQRQGYQEGDYTLFHTMPIMDFIKQDDPINQLGSLNKFDLPAPKDDDNDDDDHDHEWKILSKLKLCTPELLECIKDLKVLGRKEFKMILKFRKQARDILGIDKDEKEEEEENPKIEVEPLTEEQKIDQELQDLINKQKQKAKRLKKNANELKQKEIIRNQMNMLTDMNIGIEAAQIGADSLFNLKTAEKTGQLDKLAKGKKKMIFNDEELAKDNEIHIDEEEINDNDKDSADELDELENQLDDMYHQYQARKAERDANYRAKQARGDADDEAWNGIEEDNDDVESGKDYEMESESDDDDDEHIRLIAEKKSNGSLSRTARNFFASDSIFNELSDDVILEEIENKTKGSNGKMVESIQEQVANDNNENDDGDNDEEESDFEIVPNQKSDDDDDDESMNSDDDEVSTTTKSTTHQQKVDLATVEAMTLAHQVALGQKNKYDLIDEGINRYSFRDKDNLPDWFIDDEKKHSKLIKPITKEAAIAIKEKQKQLNARPIKKVLEAQSRKKLRALKRLEKIKKKSDLINEDSGKSERDKADEISKLMKKLNKKQKQKPKTTVVVARGSNRGLSGRPKGVKGKYKMVDGVMKNEQRALKRIAKKYKK</sequence>
<accession>Q59KF3</accession>
<accession>A0A1D8PQB8</accession>
<accession>Q59KF8</accession>
<name>SPB1_CANAL</name>
<organism>
    <name type="scientific">Candida albicans (strain SC5314 / ATCC MYA-2876)</name>
    <name type="common">Yeast</name>
    <dbReference type="NCBI Taxonomy" id="237561"/>
    <lineage>
        <taxon>Eukaryota</taxon>
        <taxon>Fungi</taxon>
        <taxon>Dikarya</taxon>
        <taxon>Ascomycota</taxon>
        <taxon>Saccharomycotina</taxon>
        <taxon>Pichiomycetes</taxon>
        <taxon>Debaryomycetaceae</taxon>
        <taxon>Candida/Lodderomyces clade</taxon>
        <taxon>Candida</taxon>
    </lineage>
</organism>
<proteinExistence type="inferred from homology"/>
<protein>
    <recommendedName>
        <fullName evidence="1">AdoMet-dependent rRNA methyltransferase SPB1</fullName>
        <ecNumber evidence="1">2.1.1.-</ecNumber>
    </recommendedName>
    <alternativeName>
        <fullName evidence="1">2'-O-ribose RNA methyltransferase</fullName>
    </alternativeName>
    <alternativeName>
        <fullName evidence="1">S-adenosyl-L-methionine-dependent methyltransferase</fullName>
    </alternativeName>
</protein>
<dbReference type="EC" id="2.1.1.-" evidence="1"/>
<dbReference type="EMBL" id="CP017628">
    <property type="protein sequence ID" value="AOW30336.1"/>
    <property type="molecule type" value="Genomic_DNA"/>
</dbReference>
<dbReference type="RefSeq" id="XP_710224.1">
    <property type="nucleotide sequence ID" value="XM_705132.2"/>
</dbReference>
<dbReference type="SMR" id="Q59KF3"/>
<dbReference type="FunCoup" id="Q59KF3">
    <property type="interactions" value="1187"/>
</dbReference>
<dbReference type="STRING" id="237561.Q59KF3"/>
<dbReference type="EnsemblFungi" id="C6_04160C_A-T">
    <property type="protein sequence ID" value="C6_04160C_A-T-p1"/>
    <property type="gene ID" value="C6_04160C_A"/>
</dbReference>
<dbReference type="GeneID" id="3648179"/>
<dbReference type="KEGG" id="cal:CAALFM_C604160CA"/>
<dbReference type="CGD" id="CAL0000201177">
    <property type="gene designation" value="SPB1"/>
</dbReference>
<dbReference type="VEuPathDB" id="FungiDB:C6_04160C_A"/>
<dbReference type="eggNOG" id="KOG1098">
    <property type="taxonomic scope" value="Eukaryota"/>
</dbReference>
<dbReference type="HOGENOM" id="CLU_009422_8_1_1"/>
<dbReference type="InParanoid" id="Q59KF3"/>
<dbReference type="OrthoDB" id="1287559at2759"/>
<dbReference type="PRO" id="PR:Q59KF3"/>
<dbReference type="Proteomes" id="UP000000559">
    <property type="component" value="Chromosome 6"/>
</dbReference>
<dbReference type="GO" id="GO:0005730">
    <property type="term" value="C:nucleolus"/>
    <property type="evidence" value="ECO:0000318"/>
    <property type="project" value="GO_Central"/>
</dbReference>
<dbReference type="GO" id="GO:0030687">
    <property type="term" value="C:preribosome, large subunit precursor"/>
    <property type="evidence" value="ECO:0000318"/>
    <property type="project" value="GO_Central"/>
</dbReference>
<dbReference type="GO" id="GO:0016435">
    <property type="term" value="F:rRNA (guanine) methyltransferase activity"/>
    <property type="evidence" value="ECO:0000318"/>
    <property type="project" value="GO_Central"/>
</dbReference>
<dbReference type="GO" id="GO:0070039">
    <property type="term" value="F:rRNA (guanosine-2'-O-)-methyltransferase activity"/>
    <property type="evidence" value="ECO:0007669"/>
    <property type="project" value="UniProtKB-UniRule"/>
</dbReference>
<dbReference type="GO" id="GO:0008650">
    <property type="term" value="F:rRNA (uridine-2'-O-)-methyltransferase activity"/>
    <property type="evidence" value="ECO:0000318"/>
    <property type="project" value="GO_Central"/>
</dbReference>
<dbReference type="GO" id="GO:0000466">
    <property type="term" value="P:maturation of 5.8S rRNA from tricistronic rRNA transcript (SSU-rRNA, 5.8S rRNA, LSU-rRNA)"/>
    <property type="evidence" value="ECO:0000318"/>
    <property type="project" value="GO_Central"/>
</dbReference>
<dbReference type="GO" id="GO:0000463">
    <property type="term" value="P:maturation of LSU-rRNA from tricistronic rRNA transcript (SSU-rRNA, 5.8S rRNA, LSU-rRNA)"/>
    <property type="evidence" value="ECO:0000318"/>
    <property type="project" value="GO_Central"/>
</dbReference>
<dbReference type="GO" id="GO:0031167">
    <property type="term" value="P:rRNA methylation"/>
    <property type="evidence" value="ECO:0000318"/>
    <property type="project" value="GO_Central"/>
</dbReference>
<dbReference type="FunFam" id="3.40.50.150:FF:000004">
    <property type="entry name" value="AdoMet-dependent rRNA methyltransferase SPB1"/>
    <property type="match status" value="1"/>
</dbReference>
<dbReference type="Gene3D" id="3.40.50.150">
    <property type="entry name" value="Vaccinia Virus protein VP39"/>
    <property type="match status" value="1"/>
</dbReference>
<dbReference type="HAMAP" id="MF_01547">
    <property type="entry name" value="RNA_methyltr_E"/>
    <property type="match status" value="1"/>
</dbReference>
<dbReference type="HAMAP" id="MF_03163">
    <property type="entry name" value="RNA_methyltr_E_SPB1"/>
    <property type="match status" value="1"/>
</dbReference>
<dbReference type="InterPro" id="IPR050082">
    <property type="entry name" value="RNA_methyltr_RlmE"/>
</dbReference>
<dbReference type="InterPro" id="IPR002877">
    <property type="entry name" value="RNA_MeTrfase_FtsJ_dom"/>
</dbReference>
<dbReference type="InterPro" id="IPR015507">
    <property type="entry name" value="rRNA-MeTfrase_E"/>
</dbReference>
<dbReference type="InterPro" id="IPR012920">
    <property type="entry name" value="rRNA_MeTfrase_SPB1-like_C"/>
</dbReference>
<dbReference type="InterPro" id="IPR024576">
    <property type="entry name" value="rRNA_MeTfrase_Spb1_DUF3381"/>
</dbReference>
<dbReference type="InterPro" id="IPR029063">
    <property type="entry name" value="SAM-dependent_MTases_sf"/>
</dbReference>
<dbReference type="InterPro" id="IPR028589">
    <property type="entry name" value="SPB1-like"/>
</dbReference>
<dbReference type="PANTHER" id="PTHR10920:SF13">
    <property type="entry name" value="PRE-RRNA 2'-O-RIBOSE RNA METHYLTRANSFERASE FTSJ3"/>
    <property type="match status" value="1"/>
</dbReference>
<dbReference type="PANTHER" id="PTHR10920">
    <property type="entry name" value="RIBOSOMAL RNA METHYLTRANSFERASE"/>
    <property type="match status" value="1"/>
</dbReference>
<dbReference type="Pfam" id="PF11861">
    <property type="entry name" value="DUF3381"/>
    <property type="match status" value="1"/>
</dbReference>
<dbReference type="Pfam" id="PF01728">
    <property type="entry name" value="FtsJ"/>
    <property type="match status" value="1"/>
</dbReference>
<dbReference type="Pfam" id="PF07780">
    <property type="entry name" value="Spb1_C"/>
    <property type="match status" value="1"/>
</dbReference>
<dbReference type="SUPFAM" id="SSF53335">
    <property type="entry name" value="S-adenosyl-L-methionine-dependent methyltransferases"/>
    <property type="match status" value="1"/>
</dbReference>
<comment type="function">
    <text evidence="1">Required for proper assembly of pre-ribosomal particles during the biogenesis of the 60S ribosomal subunit.</text>
</comment>
<comment type="catalytic activity">
    <reaction evidence="1">
        <text>a ribonucleotide in rRNA + S-adenosyl-L-methionine = a 2'-O-methylribonucleotide in rRNA + S-adenosyl-L-homocysteine + H(+)</text>
        <dbReference type="Rhea" id="RHEA:48628"/>
        <dbReference type="Rhea" id="RHEA-COMP:12164"/>
        <dbReference type="Rhea" id="RHEA-COMP:12165"/>
        <dbReference type="ChEBI" id="CHEBI:15378"/>
        <dbReference type="ChEBI" id="CHEBI:57856"/>
        <dbReference type="ChEBI" id="CHEBI:59789"/>
        <dbReference type="ChEBI" id="CHEBI:90675"/>
        <dbReference type="ChEBI" id="CHEBI:90676"/>
    </reaction>
</comment>
<comment type="subunit">
    <text evidence="1">Component of the nucleolar and nucleoplasmic pre-60S ribosomal particle.</text>
</comment>
<comment type="subcellular location">
    <subcellularLocation>
        <location evidence="1">Nucleus</location>
        <location evidence="1">Nucleolus</location>
    </subcellularLocation>
</comment>
<comment type="similarity">
    <text evidence="1">Belongs to the class I-like SAM-binding methyltransferase superfamily. RNA methyltransferase RlmE family. SPB1 subfamily.</text>
</comment>
<reference key="1">
    <citation type="journal article" date="2004" name="Proc. Natl. Acad. Sci. U.S.A.">
        <title>The diploid genome sequence of Candida albicans.</title>
        <authorList>
            <person name="Jones T."/>
            <person name="Federspiel N.A."/>
            <person name="Chibana H."/>
            <person name="Dungan J."/>
            <person name="Kalman S."/>
            <person name="Magee B.B."/>
            <person name="Newport G."/>
            <person name="Thorstenson Y.R."/>
            <person name="Agabian N."/>
            <person name="Magee P.T."/>
            <person name="Davis R.W."/>
            <person name="Scherer S."/>
        </authorList>
    </citation>
    <scope>NUCLEOTIDE SEQUENCE [LARGE SCALE GENOMIC DNA]</scope>
    <source>
        <strain>SC5314 / ATCC MYA-2876</strain>
    </source>
</reference>
<reference key="2">
    <citation type="journal article" date="2007" name="Genome Biol.">
        <title>Assembly of the Candida albicans genome into sixteen supercontigs aligned on the eight chromosomes.</title>
        <authorList>
            <person name="van het Hoog M."/>
            <person name="Rast T.J."/>
            <person name="Martchenko M."/>
            <person name="Grindle S."/>
            <person name="Dignard D."/>
            <person name="Hogues H."/>
            <person name="Cuomo C."/>
            <person name="Berriman M."/>
            <person name="Scherer S."/>
            <person name="Magee B.B."/>
            <person name="Whiteway M."/>
            <person name="Chibana H."/>
            <person name="Nantel A."/>
            <person name="Magee P.T."/>
        </authorList>
    </citation>
    <scope>GENOME REANNOTATION</scope>
    <source>
        <strain>SC5314 / ATCC MYA-2876</strain>
    </source>
</reference>
<reference key="3">
    <citation type="journal article" date="2013" name="Genome Biol.">
        <title>Assembly of a phased diploid Candida albicans genome facilitates allele-specific measurements and provides a simple model for repeat and indel structure.</title>
        <authorList>
            <person name="Muzzey D."/>
            <person name="Schwartz K."/>
            <person name="Weissman J.S."/>
            <person name="Sherlock G."/>
        </authorList>
    </citation>
    <scope>NUCLEOTIDE SEQUENCE [LARGE SCALE GENOMIC DNA]</scope>
    <scope>GENOME REANNOTATION</scope>
    <source>
        <strain>SC5314 / ATCC MYA-2876</strain>
    </source>
</reference>
<keyword id="KW-0175">Coiled coil</keyword>
<keyword id="KW-0489">Methyltransferase</keyword>
<keyword id="KW-0539">Nucleus</keyword>
<keyword id="KW-1185">Reference proteome</keyword>
<keyword id="KW-0690">Ribosome biogenesis</keyword>
<keyword id="KW-0698">rRNA processing</keyword>
<keyword id="KW-0949">S-adenosyl-L-methionine</keyword>
<keyword id="KW-0808">Transferase</keyword>
<feature type="chain" id="PRO_0000155593" description="AdoMet-dependent rRNA methyltransferase SPB1">
    <location>
        <begin position="1"/>
        <end position="845"/>
    </location>
</feature>
<feature type="region of interest" description="Disordered" evidence="2">
    <location>
        <begin position="223"/>
        <end position="247"/>
    </location>
</feature>
<feature type="region of interest" description="Disordered" evidence="2">
    <location>
        <begin position="279"/>
        <end position="298"/>
    </location>
</feature>
<feature type="region of interest" description="Disordered" evidence="2">
    <location>
        <begin position="496"/>
        <end position="546"/>
    </location>
</feature>
<feature type="region of interest" description="Disordered" evidence="2">
    <location>
        <begin position="587"/>
        <end position="660"/>
    </location>
</feature>
<feature type="region of interest" description="Disordered" evidence="2">
    <location>
        <begin position="788"/>
        <end position="821"/>
    </location>
</feature>
<feature type="coiled-coil region" evidence="1">
    <location>
        <begin position="366"/>
        <end position="402"/>
    </location>
</feature>
<feature type="coiled-coil region" evidence="1">
    <location>
        <begin position="464"/>
        <end position="502"/>
    </location>
</feature>
<feature type="coiled-coil region" evidence="1">
    <location>
        <begin position="739"/>
        <end position="796"/>
    </location>
</feature>
<feature type="compositionally biased region" description="Basic and acidic residues" evidence="2">
    <location>
        <begin position="496"/>
        <end position="512"/>
    </location>
</feature>
<feature type="compositionally biased region" description="Acidic residues" evidence="2">
    <location>
        <begin position="513"/>
        <end position="528"/>
    </location>
</feature>
<feature type="compositionally biased region" description="Acidic residues" evidence="2">
    <location>
        <begin position="536"/>
        <end position="545"/>
    </location>
</feature>
<feature type="compositionally biased region" description="Acidic residues" evidence="2">
    <location>
        <begin position="610"/>
        <end position="624"/>
    </location>
</feature>
<feature type="compositionally biased region" description="Acidic residues" evidence="2">
    <location>
        <begin position="633"/>
        <end position="648"/>
    </location>
</feature>
<feature type="compositionally biased region" description="Basic residues" evidence="2">
    <location>
        <begin position="788"/>
        <end position="797"/>
    </location>
</feature>
<feature type="active site" description="Proton acceptor" evidence="1">
    <location>
        <position position="159"/>
    </location>
</feature>
<feature type="binding site" evidence="1">
    <location>
        <position position="58"/>
    </location>
    <ligand>
        <name>S-adenosyl-L-methionine</name>
        <dbReference type="ChEBI" id="CHEBI:59789"/>
    </ligand>
</feature>
<feature type="binding site" evidence="1">
    <location>
        <position position="60"/>
    </location>
    <ligand>
        <name>S-adenosyl-L-methionine</name>
        <dbReference type="ChEBI" id="CHEBI:59789"/>
    </ligand>
</feature>
<feature type="binding site" evidence="1">
    <location>
        <position position="78"/>
    </location>
    <ligand>
        <name>S-adenosyl-L-methionine</name>
        <dbReference type="ChEBI" id="CHEBI:59789"/>
    </ligand>
</feature>
<feature type="binding site" evidence="1">
    <location>
        <position position="94"/>
    </location>
    <ligand>
        <name>S-adenosyl-L-methionine</name>
        <dbReference type="ChEBI" id="CHEBI:59789"/>
    </ligand>
</feature>
<feature type="binding site" evidence="1">
    <location>
        <position position="119"/>
    </location>
    <ligand>
        <name>S-adenosyl-L-methionine</name>
        <dbReference type="ChEBI" id="CHEBI:59789"/>
    </ligand>
</feature>
<gene>
    <name evidence="1" type="primary">SPB1</name>
    <name type="ordered locus">CAALFM_C604160CA</name>
    <name type="ORF">CaO19.76</name>
    <name type="ORF">CaO19.7727</name>
</gene>